<reference key="1">
    <citation type="journal article" date="2004" name="J. Infect. Dis.">
        <title>Progress toward characterization of the group A Streptococcus metagenome: complete genome sequence of a macrolide-resistant serotype M6 strain.</title>
        <authorList>
            <person name="Banks D.J."/>
            <person name="Porcella S.F."/>
            <person name="Barbian K.D."/>
            <person name="Beres S.B."/>
            <person name="Philips L.E."/>
            <person name="Voyich J.M."/>
            <person name="DeLeo F.R."/>
            <person name="Martin J.M."/>
            <person name="Somerville G.A."/>
            <person name="Musser J.M."/>
        </authorList>
    </citation>
    <scope>NUCLEOTIDE SEQUENCE [LARGE SCALE GENOMIC DNA]</scope>
    <source>
        <strain>ATCC BAA-946 / MGAS10394</strain>
    </source>
</reference>
<sequence>MAKKSKQMRAALEKVDSTKAYSVEEAVALVKETNFAKFDASVEVAYNLNIDVRKADQQIRGAMVLPNGTGKTQRVLVFARGAKAEEAKAAGADFVGEDDLVAKINGGWLDFDVVIATPDMMAIVGRLGRVLGPRNLMPNPKTGTVTMDVAKAVEESKGGKITYRADKAGNVQALIGKVSFDADKLVENFKAFHDVMAKAKPATAKGTYMANVSITSTQGVGIKVDPNSL</sequence>
<gene>
    <name evidence="1" type="primary">rplA</name>
    <name type="ordered locus">M6_Spy0402</name>
</gene>
<organism>
    <name type="scientific">Streptococcus pyogenes serotype M6 (strain ATCC BAA-946 / MGAS10394)</name>
    <dbReference type="NCBI Taxonomy" id="286636"/>
    <lineage>
        <taxon>Bacteria</taxon>
        <taxon>Bacillati</taxon>
        <taxon>Bacillota</taxon>
        <taxon>Bacilli</taxon>
        <taxon>Lactobacillales</taxon>
        <taxon>Streptococcaceae</taxon>
        <taxon>Streptococcus</taxon>
    </lineage>
</organism>
<dbReference type="EMBL" id="CP000003">
    <property type="protein sequence ID" value="AAT86537.1"/>
    <property type="molecule type" value="Genomic_DNA"/>
</dbReference>
<dbReference type="RefSeq" id="WP_002985768.1">
    <property type="nucleotide sequence ID" value="NC_006086.1"/>
</dbReference>
<dbReference type="SMR" id="Q5XDH6"/>
<dbReference type="KEGG" id="spa:M6_Spy0402"/>
<dbReference type="HOGENOM" id="CLU_062853_0_0_9"/>
<dbReference type="Proteomes" id="UP000001167">
    <property type="component" value="Chromosome"/>
</dbReference>
<dbReference type="GO" id="GO:0015934">
    <property type="term" value="C:large ribosomal subunit"/>
    <property type="evidence" value="ECO:0007669"/>
    <property type="project" value="InterPro"/>
</dbReference>
<dbReference type="GO" id="GO:0019843">
    <property type="term" value="F:rRNA binding"/>
    <property type="evidence" value="ECO:0007669"/>
    <property type="project" value="UniProtKB-UniRule"/>
</dbReference>
<dbReference type="GO" id="GO:0003735">
    <property type="term" value="F:structural constituent of ribosome"/>
    <property type="evidence" value="ECO:0007669"/>
    <property type="project" value="InterPro"/>
</dbReference>
<dbReference type="GO" id="GO:0000049">
    <property type="term" value="F:tRNA binding"/>
    <property type="evidence" value="ECO:0007669"/>
    <property type="project" value="UniProtKB-KW"/>
</dbReference>
<dbReference type="GO" id="GO:0006417">
    <property type="term" value="P:regulation of translation"/>
    <property type="evidence" value="ECO:0007669"/>
    <property type="project" value="UniProtKB-KW"/>
</dbReference>
<dbReference type="GO" id="GO:0006412">
    <property type="term" value="P:translation"/>
    <property type="evidence" value="ECO:0007669"/>
    <property type="project" value="UniProtKB-UniRule"/>
</dbReference>
<dbReference type="CDD" id="cd00403">
    <property type="entry name" value="Ribosomal_L1"/>
    <property type="match status" value="1"/>
</dbReference>
<dbReference type="FunFam" id="3.40.50.790:FF:000001">
    <property type="entry name" value="50S ribosomal protein L1"/>
    <property type="match status" value="1"/>
</dbReference>
<dbReference type="Gene3D" id="3.30.190.20">
    <property type="match status" value="1"/>
</dbReference>
<dbReference type="Gene3D" id="3.40.50.790">
    <property type="match status" value="1"/>
</dbReference>
<dbReference type="HAMAP" id="MF_01318_B">
    <property type="entry name" value="Ribosomal_uL1_B"/>
    <property type="match status" value="1"/>
</dbReference>
<dbReference type="InterPro" id="IPR005878">
    <property type="entry name" value="Ribosom_uL1_bac-type"/>
</dbReference>
<dbReference type="InterPro" id="IPR002143">
    <property type="entry name" value="Ribosomal_uL1"/>
</dbReference>
<dbReference type="InterPro" id="IPR023674">
    <property type="entry name" value="Ribosomal_uL1-like"/>
</dbReference>
<dbReference type="InterPro" id="IPR028364">
    <property type="entry name" value="Ribosomal_uL1/biogenesis"/>
</dbReference>
<dbReference type="InterPro" id="IPR016095">
    <property type="entry name" value="Ribosomal_uL1_3-a/b-sand"/>
</dbReference>
<dbReference type="InterPro" id="IPR023673">
    <property type="entry name" value="Ribosomal_uL1_CS"/>
</dbReference>
<dbReference type="NCBIfam" id="TIGR01169">
    <property type="entry name" value="rplA_bact"/>
    <property type="match status" value="1"/>
</dbReference>
<dbReference type="PANTHER" id="PTHR36427">
    <property type="entry name" value="54S RIBOSOMAL PROTEIN L1, MITOCHONDRIAL"/>
    <property type="match status" value="1"/>
</dbReference>
<dbReference type="PANTHER" id="PTHR36427:SF3">
    <property type="entry name" value="LARGE RIBOSOMAL SUBUNIT PROTEIN UL1M"/>
    <property type="match status" value="1"/>
</dbReference>
<dbReference type="Pfam" id="PF00687">
    <property type="entry name" value="Ribosomal_L1"/>
    <property type="match status" value="1"/>
</dbReference>
<dbReference type="PIRSF" id="PIRSF002155">
    <property type="entry name" value="Ribosomal_L1"/>
    <property type="match status" value="1"/>
</dbReference>
<dbReference type="SUPFAM" id="SSF56808">
    <property type="entry name" value="Ribosomal protein L1"/>
    <property type="match status" value="1"/>
</dbReference>
<dbReference type="PROSITE" id="PS01199">
    <property type="entry name" value="RIBOSOMAL_L1"/>
    <property type="match status" value="1"/>
</dbReference>
<keyword id="KW-0678">Repressor</keyword>
<keyword id="KW-0687">Ribonucleoprotein</keyword>
<keyword id="KW-0689">Ribosomal protein</keyword>
<keyword id="KW-0694">RNA-binding</keyword>
<keyword id="KW-0699">rRNA-binding</keyword>
<keyword id="KW-0810">Translation regulation</keyword>
<keyword id="KW-0820">tRNA-binding</keyword>
<feature type="chain" id="PRO_0000125753" description="Large ribosomal subunit protein uL1">
    <location>
        <begin position="1"/>
        <end position="229"/>
    </location>
</feature>
<comment type="function">
    <text evidence="1">Binds directly to 23S rRNA. The L1 stalk is quite mobile in the ribosome, and is involved in E site tRNA release.</text>
</comment>
<comment type="function">
    <text evidence="1">Protein L1 is also a translational repressor protein, it controls the translation of the L11 operon by binding to its mRNA.</text>
</comment>
<comment type="subunit">
    <text evidence="1">Part of the 50S ribosomal subunit.</text>
</comment>
<comment type="similarity">
    <text evidence="1">Belongs to the universal ribosomal protein uL1 family.</text>
</comment>
<proteinExistence type="inferred from homology"/>
<accession>Q5XDH6</accession>
<protein>
    <recommendedName>
        <fullName evidence="1">Large ribosomal subunit protein uL1</fullName>
    </recommendedName>
    <alternativeName>
        <fullName evidence="2">50S ribosomal protein L1</fullName>
    </alternativeName>
</protein>
<evidence type="ECO:0000255" key="1">
    <source>
        <dbReference type="HAMAP-Rule" id="MF_01318"/>
    </source>
</evidence>
<evidence type="ECO:0000305" key="2"/>
<name>RL1_STRP6</name>